<comment type="function">
    <text evidence="2 3 8">Transcriptional repressor. Represses transcription from both N box- and E box-containing promoters (By similarity). Demarcates the prospective midbrain-hindbrain boundary (MHB) region in the neuroectoderm in early gastrulae embryos by repressing transcription of a number of target genes.</text>
</comment>
<comment type="subunit">
    <text evidence="1">Transcription repression requires formation of a complex with a corepressor protein of the Groucho/TLE family.</text>
</comment>
<comment type="subcellular location">
    <subcellularLocation>
        <location evidence="2 5 6">Nucleus</location>
    </subcellularLocation>
</comment>
<comment type="tissue specificity">
    <text evidence="7">Expressed in the presumptive midbrain-hindbrain boundary (MHB) as early as the early gastrula stage (stage 10.5). Expression in the MHB continues through to tailbud stage. Also transiently expressed in the eye anlage at late neurula stage.</text>
</comment>
<comment type="induction">
    <text evidence="8">Not induced by Notch-signaling.</text>
</comment>
<comment type="domain">
    <text>Has a particular type of basic domain which includes a helix-interrupting proline.</text>
</comment>
<comment type="domain">
    <text evidence="1">The C-terminal WRPW motif is a transcriptional repression domain necessary for the interaction with Groucho/TLE family members, transcriptional corepressors recruited to specific target DNA by Hairy-related proteins.</text>
</comment>
<sequence>MKGTSEVKPMETHRKLLKPLVEKRRRERINNSLEKLRIFLSQTLKSEKLKNPKVEKAEILECTVQFLQSRKLLPLDREAVDKEYQSGFQHCLETTLHFMNSKPDMNGVTKELLSHQMSSCKPPSDAWSPTCAPLTKHVPSLSYQDSTPHLVSNSISISPTKTLVDSHFTYQTFKTWRPWV</sequence>
<accession>Q8UW72</accession>
<evidence type="ECO:0000250" key="1">
    <source>
        <dbReference type="UniProtKB" id="P14003"/>
    </source>
</evidence>
<evidence type="ECO:0000250" key="2">
    <source>
        <dbReference type="UniProtKB" id="Q8BKT2"/>
    </source>
</evidence>
<evidence type="ECO:0000250" key="3">
    <source>
        <dbReference type="UniProtKB" id="Q8UW74"/>
    </source>
</evidence>
<evidence type="ECO:0000255" key="4"/>
<evidence type="ECO:0000255" key="5">
    <source>
        <dbReference type="PROSITE-ProRule" id="PRU00380"/>
    </source>
</evidence>
<evidence type="ECO:0000255" key="6">
    <source>
        <dbReference type="PROSITE-ProRule" id="PRU00981"/>
    </source>
</evidence>
<evidence type="ECO:0000269" key="7">
    <source>
    </source>
</evidence>
<evidence type="ECO:0000269" key="8">
    <source>
    </source>
</evidence>
<evidence type="ECO:0000305" key="9"/>
<evidence type="ECO:0000312" key="10">
    <source>
        <dbReference type="EMBL" id="BAB78542.1"/>
    </source>
</evidence>
<gene>
    <name type="primary">hes7.1-b</name>
</gene>
<proteinExistence type="evidence at transcript level"/>
<dbReference type="EMBL" id="AB071434">
    <property type="protein sequence ID" value="BAB78542.1"/>
    <property type="molecule type" value="mRNA"/>
</dbReference>
<dbReference type="RefSeq" id="NP_001082175.1">
    <property type="nucleotide sequence ID" value="NM_001088706.1"/>
</dbReference>
<dbReference type="SMR" id="Q8UW72"/>
<dbReference type="ELM" id="Q8UW72"/>
<dbReference type="GeneID" id="398267"/>
<dbReference type="KEGG" id="xla:398267"/>
<dbReference type="AGR" id="Xenbase:XB-GENE-876475"/>
<dbReference type="CTD" id="398267"/>
<dbReference type="Xenbase" id="XB-GENE-876475">
    <property type="gene designation" value="hes7.L"/>
</dbReference>
<dbReference type="OrthoDB" id="6085656at2759"/>
<dbReference type="Proteomes" id="UP000186698">
    <property type="component" value="Chromosome 3L"/>
</dbReference>
<dbReference type="Bgee" id="398267">
    <property type="expression patterns" value="Expressed in neurula embryo and 2 other cell types or tissues"/>
</dbReference>
<dbReference type="GO" id="GO:0005634">
    <property type="term" value="C:nucleus"/>
    <property type="evidence" value="ECO:0000250"/>
    <property type="project" value="UniProtKB"/>
</dbReference>
<dbReference type="GO" id="GO:0003677">
    <property type="term" value="F:DNA binding"/>
    <property type="evidence" value="ECO:0007669"/>
    <property type="project" value="UniProtKB-KW"/>
</dbReference>
<dbReference type="GO" id="GO:0046983">
    <property type="term" value="F:protein dimerization activity"/>
    <property type="evidence" value="ECO:0007669"/>
    <property type="project" value="InterPro"/>
</dbReference>
<dbReference type="GO" id="GO:0030917">
    <property type="term" value="P:midbrain-hindbrain boundary development"/>
    <property type="evidence" value="ECO:0000250"/>
    <property type="project" value="UniProtKB"/>
</dbReference>
<dbReference type="GO" id="GO:0045892">
    <property type="term" value="P:negative regulation of DNA-templated transcription"/>
    <property type="evidence" value="ECO:0000250"/>
    <property type="project" value="UniProtKB"/>
</dbReference>
<dbReference type="GO" id="GO:0000122">
    <property type="term" value="P:negative regulation of transcription by RNA polymerase II"/>
    <property type="evidence" value="ECO:0000315"/>
    <property type="project" value="UniProtKB"/>
</dbReference>
<dbReference type="CDD" id="cd11462">
    <property type="entry name" value="bHLH-O_HES7"/>
    <property type="match status" value="1"/>
</dbReference>
<dbReference type="FunFam" id="4.10.280.10:FF:000063">
    <property type="entry name" value="transcription factor HES-7 isoform X1"/>
    <property type="match status" value="1"/>
</dbReference>
<dbReference type="Gene3D" id="4.10.280.10">
    <property type="entry name" value="Helix-loop-helix DNA-binding domain"/>
    <property type="match status" value="1"/>
</dbReference>
<dbReference type="InterPro" id="IPR011598">
    <property type="entry name" value="bHLH_dom"/>
</dbReference>
<dbReference type="InterPro" id="IPR032644">
    <property type="entry name" value="HES-7_bHLH-O"/>
</dbReference>
<dbReference type="InterPro" id="IPR050370">
    <property type="entry name" value="HES_HEY"/>
</dbReference>
<dbReference type="InterPro" id="IPR036638">
    <property type="entry name" value="HLH_DNA-bd_sf"/>
</dbReference>
<dbReference type="InterPro" id="IPR003650">
    <property type="entry name" value="Orange_dom"/>
</dbReference>
<dbReference type="PANTHER" id="PTHR10985">
    <property type="entry name" value="BASIC HELIX-LOOP-HELIX TRANSCRIPTION FACTOR, HES-RELATED"/>
    <property type="match status" value="1"/>
</dbReference>
<dbReference type="Pfam" id="PF07527">
    <property type="entry name" value="Hairy_orange"/>
    <property type="match status" value="1"/>
</dbReference>
<dbReference type="Pfam" id="PF00010">
    <property type="entry name" value="HLH"/>
    <property type="match status" value="1"/>
</dbReference>
<dbReference type="SMART" id="SM00353">
    <property type="entry name" value="HLH"/>
    <property type="match status" value="1"/>
</dbReference>
<dbReference type="SUPFAM" id="SSF47459">
    <property type="entry name" value="HLH, helix-loop-helix DNA-binding domain"/>
    <property type="match status" value="1"/>
</dbReference>
<dbReference type="PROSITE" id="PS50888">
    <property type="entry name" value="BHLH"/>
    <property type="match status" value="1"/>
</dbReference>
<dbReference type="PROSITE" id="PS51054">
    <property type="entry name" value="ORANGE"/>
    <property type="match status" value="1"/>
</dbReference>
<keyword id="KW-0217">Developmental protein</keyword>
<keyword id="KW-0238">DNA-binding</keyword>
<keyword id="KW-0539">Nucleus</keyword>
<keyword id="KW-1185">Reference proteome</keyword>
<keyword id="KW-0678">Repressor</keyword>
<keyword id="KW-0804">Transcription</keyword>
<keyword id="KW-0805">Transcription regulation</keyword>
<reference evidence="9 10" key="1">
    <citation type="journal article" date="2001" name="Mech. Dev.">
        <title>Early patterning of the prospective midbrain-hindbrain boundary by the HES-related gene XHR1 in Xenopus embryos.</title>
        <authorList>
            <person name="Shinga J."/>
            <person name="Itoh M."/>
            <person name="Shiokawa K."/>
            <person name="Taira S."/>
            <person name="Taira M."/>
        </authorList>
    </citation>
    <scope>NUCLEOTIDE SEQUENCE [MRNA]</scope>
    <scope>TISSUE SPECIFICITY</scope>
</reference>
<reference evidence="9" key="2">
    <citation type="journal article" date="2005" name="Dev. Biol.">
        <title>Identification of target genes for the Xenopus Hes-related protein XHR1, a prepattern factor specifying the midbrain-hindbrain boundary.</title>
        <authorList>
            <person name="Takada H."/>
            <person name="Hattori D."/>
            <person name="Kitayama A."/>
            <person name="Ueno N."/>
            <person name="Taira M."/>
        </authorList>
    </citation>
    <scope>FUNCTION</scope>
    <scope>LACK OF INDUCTION BY NOTCH SIGNALING</scope>
</reference>
<organism>
    <name type="scientific">Xenopus laevis</name>
    <name type="common">African clawed frog</name>
    <dbReference type="NCBI Taxonomy" id="8355"/>
    <lineage>
        <taxon>Eukaryota</taxon>
        <taxon>Metazoa</taxon>
        <taxon>Chordata</taxon>
        <taxon>Craniata</taxon>
        <taxon>Vertebrata</taxon>
        <taxon>Euteleostomi</taxon>
        <taxon>Amphibia</taxon>
        <taxon>Batrachia</taxon>
        <taxon>Anura</taxon>
        <taxon>Pipoidea</taxon>
        <taxon>Pipidae</taxon>
        <taxon>Xenopodinae</taxon>
        <taxon>Xenopus</taxon>
        <taxon>Xenopus</taxon>
    </lineage>
</organism>
<protein>
    <recommendedName>
        <fullName>Transcription factor HES-7.1-B</fullName>
    </recommendedName>
    <alternativeName>
        <fullName>HES-related protein 1-B</fullName>
        <shortName evidence="10">XHR1-B</shortName>
    </alternativeName>
    <alternativeName>
        <fullName>Hairy and enhancer of split 7.1-B</fullName>
    </alternativeName>
</protein>
<feature type="chain" id="PRO_0000370216" description="Transcription factor HES-7.1-B">
    <location>
        <begin position="1"/>
        <end position="180"/>
    </location>
</feature>
<feature type="domain" description="bHLH" evidence="6">
    <location>
        <begin position="13"/>
        <end position="70"/>
    </location>
</feature>
<feature type="domain" description="Orange" evidence="5">
    <location>
        <begin position="84"/>
        <end position="116"/>
    </location>
</feature>
<feature type="short sequence motif" description="WRPW motif" evidence="4">
    <location>
        <begin position="176"/>
        <end position="179"/>
    </location>
</feature>
<name>HE71B_XENLA</name>